<accession>P32283</accession>
<proteinExistence type="predicted"/>
<dbReference type="EMBL" id="J03968">
    <property type="protein sequence ID" value="AAA32528.1"/>
    <property type="molecule type" value="Genomic_DNA"/>
</dbReference>
<dbReference type="EMBL" id="AF158101">
    <property type="protein sequence ID" value="AAD42600.1"/>
    <property type="molecule type" value="Genomic_DNA"/>
</dbReference>
<dbReference type="RefSeq" id="NP_049844.1">
    <property type="nucleotide sequence ID" value="NC_000866.4"/>
</dbReference>
<dbReference type="SMR" id="P32283"/>
<dbReference type="GeneID" id="1258736"/>
<dbReference type="KEGG" id="vg:1258736"/>
<dbReference type="OrthoDB" id="19703at10239"/>
<dbReference type="Proteomes" id="UP000009087">
    <property type="component" value="Segment"/>
</dbReference>
<dbReference type="GO" id="GO:0004519">
    <property type="term" value="F:endonuclease activity"/>
    <property type="evidence" value="ECO:0007669"/>
    <property type="project" value="UniProtKB-KW"/>
</dbReference>
<dbReference type="CDD" id="cd00085">
    <property type="entry name" value="HNHc"/>
    <property type="match status" value="1"/>
</dbReference>
<dbReference type="InterPro" id="IPR003615">
    <property type="entry name" value="HNH_nuc"/>
</dbReference>
<dbReference type="SMART" id="SM00507">
    <property type="entry name" value="HNHc"/>
    <property type="match status" value="1"/>
</dbReference>
<evidence type="ECO:0000256" key="1">
    <source>
        <dbReference type="SAM" id="MobiDB-lite"/>
    </source>
</evidence>
<feature type="chain" id="PRO_0000164953" description="Probable mobile endonuclease E">
    <location>
        <begin position="1"/>
        <end position="141"/>
    </location>
</feature>
<feature type="region of interest" description="Disordered" evidence="1">
    <location>
        <begin position="115"/>
        <end position="141"/>
    </location>
</feature>
<feature type="compositionally biased region" description="Polar residues" evidence="1">
    <location>
        <begin position="122"/>
        <end position="141"/>
    </location>
</feature>
<gene>
    <name type="primary">mobE</name>
    <name type="synonym">nrdB.2</name>
</gene>
<keyword id="KW-0255">Endonuclease</keyword>
<keyword id="KW-0378">Hydrolase</keyword>
<keyword id="KW-0540">Nuclease</keyword>
<keyword id="KW-1185">Reference proteome</keyword>
<name>MOBE_BPT4</name>
<organismHost>
    <name type="scientific">Escherichia coli</name>
    <dbReference type="NCBI Taxonomy" id="562"/>
</organismHost>
<organism>
    <name type="scientific">Enterobacteria phage T4</name>
    <name type="common">Bacteriophage T4</name>
    <dbReference type="NCBI Taxonomy" id="10665"/>
    <lineage>
        <taxon>Viruses</taxon>
        <taxon>Duplodnaviria</taxon>
        <taxon>Heunggongvirae</taxon>
        <taxon>Uroviricota</taxon>
        <taxon>Caudoviricetes</taxon>
        <taxon>Straboviridae</taxon>
        <taxon>Tevenvirinae</taxon>
        <taxon>Tequatrovirus</taxon>
    </lineage>
</organism>
<reference key="1">
    <citation type="journal article" date="1988" name="J. Biol. Chem.">
        <title>Total sequence, flanking regions, and transcripts of bacteriophage T4 nrdA gene, coding for alpha chain of ribonucleoside diphosphate reductase.</title>
        <authorList>
            <person name="Tseng M.J."/>
            <person name="Hilfinger J.M."/>
            <person name="Walsh A."/>
            <person name="Greenberg G.R."/>
        </authorList>
    </citation>
    <scope>NUCLEOTIDE SEQUENCE [GENOMIC DNA]</scope>
</reference>
<reference key="2">
    <citation type="journal article" date="2003" name="Microbiol. Mol. Biol. Rev.">
        <title>Bacteriophage T4 genome.</title>
        <authorList>
            <person name="Miller E.S."/>
            <person name="Kutter E."/>
            <person name="Mosig G."/>
            <person name="Arisaka F."/>
            <person name="Kunisawa T."/>
            <person name="Ruger W."/>
        </authorList>
    </citation>
    <scope>NUCLEOTIDE SEQUENCE [LARGE SCALE GENOMIC DNA]</scope>
</reference>
<protein>
    <recommendedName>
        <fullName>Probable mobile endonuclease E</fullName>
    </recommendedName>
</protein>
<sequence>MNYQKIYNDLISRAQAREPLSEYKETHHIIPRCMGGSDDKENLVELTAREHFIAHAILSKIYPVKSVIFAFFMMCNMKGTKKRHYKVHSKIYAHAKKLNSQFRKGTVISEETRLKMSKSENRSAFNRRNQTQNIGGNQRKG</sequence>